<organismHost>
    <name type="scientific">Lactococcus lactis</name>
    <dbReference type="NCBI Taxonomy" id="1358"/>
</organismHost>
<feature type="chain" id="PRO_0000438259" description="Terminase small subunit">
    <location>
        <begin position="1"/>
        <end position="174"/>
    </location>
</feature>
<sequence>MQTQKGGRPTILPKMYEEPLFSQIIDKIESGCNDREIYTSLHCSAKTFRKWRDDNIKAYDEAKGIARGNLLELAESALASKLTVRTLKETETIYDADGNVEKVKVKEKELDKDSLVAMMVAKAGNPELYNPTEWRRLQQEESSAHDLKAKIEELDDYKLSKYKTPEIEVPEGFE</sequence>
<organism>
    <name type="scientific">Lactococcus phage SK1</name>
    <name type="common">Lactococcus lactis bacteriophage SK1</name>
    <dbReference type="NCBI Taxonomy" id="2905675"/>
    <lineage>
        <taxon>Viruses</taxon>
        <taxon>Duplodnaviria</taxon>
        <taxon>Heunggongvirae</taxon>
        <taxon>Uroviricota</taxon>
        <taxon>Caudoviricetes</taxon>
        <taxon>Skunavirus</taxon>
        <taxon>Skunavirus sk1</taxon>
    </lineage>
</organism>
<reference key="1">
    <citation type="journal article" date="1997" name="Mol. Microbiol.">
        <title>Analysis of the DNA sequence, gene expression, origin of replication and modular structure of the Lactococcus lactis lytic bacteriophage sk1.</title>
        <authorList>
            <person name="Chandry P.S."/>
            <person name="Moore S.C."/>
            <person name="Boyce J.D."/>
            <person name="Davidson B.E."/>
            <person name="Hillier A.J."/>
        </authorList>
    </citation>
    <scope>NUCLEOTIDE SEQUENCE [LARGE SCALE GENOMIC DNA]</scope>
</reference>
<comment type="function">
    <text evidence="1">Probable terminase small subunit. The terminase lies at a unique vertex of the procapsid and is composed of two subunits, a small terminase subunit and a large terminase subunit. Both terminase subunits heterooligomerize and are docked on the portal protein to form the packaging machine. Once the capsid is packaged with the DNA, the terminase complex is substituted by the connector proteins gp15.</text>
</comment>
<comment type="similarity">
    <text evidence="2">Belongs to the skunalikevirus terminase small subunit family.</text>
</comment>
<evidence type="ECO:0000250" key="1">
    <source>
        <dbReference type="UniProtKB" id="D3WAC0"/>
    </source>
</evidence>
<evidence type="ECO:0000305" key="2"/>
<proteinExistence type="inferred from homology"/>
<keyword id="KW-1185">Reference proteome</keyword>
<keyword id="KW-0231">Viral genome packaging</keyword>
<keyword id="KW-1188">Viral release from host cell</keyword>
<dbReference type="EMBL" id="AF011378">
    <property type="protein sequence ID" value="AAB70040.1"/>
    <property type="molecule type" value="Genomic_DNA"/>
</dbReference>
<dbReference type="RefSeq" id="NP_044947.1">
    <property type="nucleotide sequence ID" value="NC_001835.1"/>
</dbReference>
<dbReference type="GeneID" id="1261292"/>
<dbReference type="KEGG" id="vg:1261292"/>
<dbReference type="Proteomes" id="UP000000839">
    <property type="component" value="Genome"/>
</dbReference>
<dbReference type="InterPro" id="IPR010789">
    <property type="entry name" value="Terminase_ssu_Skunalikevirus"/>
</dbReference>
<dbReference type="Pfam" id="PF07141">
    <property type="entry name" value="Phage_term_sma"/>
    <property type="match status" value="1"/>
</dbReference>
<accession>O21869</accession>
<name>TERS_BPLSK</name>
<protein>
    <recommendedName>
        <fullName evidence="1">Terminase small subunit</fullName>
    </recommendedName>
    <alternativeName>
        <fullName evidence="2">Gene product 1</fullName>
        <shortName evidence="2">gp1</shortName>
    </alternativeName>
</protein>